<name>YOEB_ECOL6</name>
<keyword id="KW-0255">Endonuclease</keyword>
<keyword id="KW-0378">Hydrolase</keyword>
<keyword id="KW-0540">Nuclease</keyword>
<keyword id="KW-1185">Reference proteome</keyword>
<keyword id="KW-0678">Repressor</keyword>
<keyword id="KW-0694">RNA-binding</keyword>
<keyword id="KW-1277">Toxin-antitoxin system</keyword>
<keyword id="KW-0804">Transcription</keyword>
<keyword id="KW-0805">Transcription regulation</keyword>
<dbReference type="EC" id="3.1.-.-"/>
<dbReference type="EMBL" id="AE014075">
    <property type="protein sequence ID" value="AAN80998.1"/>
    <property type="molecule type" value="Genomic_DNA"/>
</dbReference>
<dbReference type="RefSeq" id="WP_000767822.1">
    <property type="nucleotide sequence ID" value="NZ_CP051263.1"/>
</dbReference>
<dbReference type="SMR" id="Q8FG53"/>
<dbReference type="STRING" id="199310.c2544"/>
<dbReference type="KEGG" id="ecc:c2544"/>
<dbReference type="eggNOG" id="COG4115">
    <property type="taxonomic scope" value="Bacteria"/>
</dbReference>
<dbReference type="HOGENOM" id="CLU_169492_2_2_6"/>
<dbReference type="BioCyc" id="ECOL199310:C2544-MONOMER"/>
<dbReference type="Proteomes" id="UP000001410">
    <property type="component" value="Chromosome"/>
</dbReference>
<dbReference type="GO" id="GO:0004519">
    <property type="term" value="F:endonuclease activity"/>
    <property type="evidence" value="ECO:0007669"/>
    <property type="project" value="UniProtKB-KW"/>
</dbReference>
<dbReference type="GO" id="GO:0003723">
    <property type="term" value="F:RNA binding"/>
    <property type="evidence" value="ECO:0007669"/>
    <property type="project" value="UniProtKB-KW"/>
</dbReference>
<dbReference type="GO" id="GO:0098795">
    <property type="term" value="P:global gene silencing by mRNA cleavage"/>
    <property type="evidence" value="ECO:0007669"/>
    <property type="project" value="TreeGrafter"/>
</dbReference>
<dbReference type="GO" id="GO:0006401">
    <property type="term" value="P:RNA catabolic process"/>
    <property type="evidence" value="ECO:0007669"/>
    <property type="project" value="InterPro"/>
</dbReference>
<dbReference type="FunFam" id="3.30.2310.20:FF:000001">
    <property type="entry name" value="Addiction module toxin, Txe/YoeB family"/>
    <property type="match status" value="1"/>
</dbReference>
<dbReference type="Gene3D" id="3.30.2310.20">
    <property type="entry name" value="RelE-like"/>
    <property type="match status" value="1"/>
</dbReference>
<dbReference type="InterPro" id="IPR035093">
    <property type="entry name" value="RelE/ParE_toxin_dom_sf"/>
</dbReference>
<dbReference type="InterPro" id="IPR009614">
    <property type="entry name" value="YoeB_toxin"/>
</dbReference>
<dbReference type="NCBIfam" id="TIGR02116">
    <property type="entry name" value="toxin_Txe_YoeB"/>
    <property type="match status" value="1"/>
</dbReference>
<dbReference type="PANTHER" id="PTHR38039">
    <property type="entry name" value="TOXIN YOEB"/>
    <property type="match status" value="1"/>
</dbReference>
<dbReference type="PANTHER" id="PTHR38039:SF1">
    <property type="entry name" value="TOXIN YOEB"/>
    <property type="match status" value="1"/>
</dbReference>
<dbReference type="Pfam" id="PF06769">
    <property type="entry name" value="YoeB_toxin"/>
    <property type="match status" value="1"/>
</dbReference>
<dbReference type="SUPFAM" id="SSF143011">
    <property type="entry name" value="RelE-like"/>
    <property type="match status" value="1"/>
</dbReference>
<proteinExistence type="inferred from homology"/>
<comment type="function">
    <text evidence="1">Toxic component of a type II toxin-antitoxin (TA) system. It has been proposed to be an mRNA interferase but also an inhibitor of translation initiation. Has an in vitro RNase activity and preferentially cleaves at the 3'-end of purine ribonucleotides. YefM binds to the promoter region of the yefM-yeoB operon to repress transcription, YeoB acts as a corepressor (By similarity).</text>
</comment>
<comment type="subunit">
    <text evidence="1">Forms a complex with antitoxin YefM, in which the toxin is inactive.</text>
</comment>
<comment type="disruption phenotype">
    <text evidence="2">Deletion of the tomB-hha operon causes reduced infection of the mouse bladder but not of the kidney.</text>
</comment>
<comment type="similarity">
    <text evidence="3">Belongs to the YoeB family.</text>
</comment>
<evidence type="ECO:0000250" key="1"/>
<evidence type="ECO:0000269" key="2">
    <source>
    </source>
</evidence>
<evidence type="ECO:0000305" key="3"/>
<feature type="chain" id="PRO_0000216210" description="Toxin YoeB">
    <location>
        <begin position="1"/>
        <end position="84"/>
    </location>
</feature>
<feature type="active site" description="Proton acceptor" evidence="1">
    <location>
        <position position="46"/>
    </location>
</feature>
<feature type="active site" description="Proton donor" evidence="1">
    <location>
        <position position="83"/>
    </location>
</feature>
<gene>
    <name type="primary">yoeB</name>
    <name type="ordered locus">c2544</name>
</gene>
<protein>
    <recommendedName>
        <fullName>Toxin YoeB</fullName>
        <ecNumber>3.1.-.-</ecNumber>
    </recommendedName>
    <alternativeName>
        <fullName>Putative endoribonuclease YoeB</fullName>
    </alternativeName>
    <alternativeName>
        <fullName>Putative mRNA interferase Yoeb</fullName>
    </alternativeName>
</protein>
<sequence>MKLIWSEESWDDYLYWQETDKRIVKKINEIIKDTRRTPFEGKGKPEPLKHNLSGFWSRRITEEHRLVYAVTDDSLLIAACRYHY</sequence>
<reference key="1">
    <citation type="journal article" date="2002" name="Proc. Natl. Acad. Sci. U.S.A.">
        <title>Extensive mosaic structure revealed by the complete genome sequence of uropathogenic Escherichia coli.</title>
        <authorList>
            <person name="Welch R.A."/>
            <person name="Burland V."/>
            <person name="Plunkett G. III"/>
            <person name="Redford P."/>
            <person name="Roesch P."/>
            <person name="Rasko D."/>
            <person name="Buckles E.L."/>
            <person name="Liou S.-R."/>
            <person name="Boutin A."/>
            <person name="Hackett J."/>
            <person name="Stroud D."/>
            <person name="Mayhew G.F."/>
            <person name="Rose D.J."/>
            <person name="Zhou S."/>
            <person name="Schwartz D.C."/>
            <person name="Perna N.T."/>
            <person name="Mobley H.L.T."/>
            <person name="Donnenberg M.S."/>
            <person name="Blattner F.R."/>
        </authorList>
    </citation>
    <scope>NUCLEOTIDE SEQUENCE [LARGE SCALE GENOMIC DNA]</scope>
    <source>
        <strain>CFT073 / ATCC 700928 / UPEC</strain>
    </source>
</reference>
<reference key="2">
    <citation type="journal article" date="2012" name="PLoS Pathog.">
        <title>Toxin-antitoxin systems are important for niche-specific colonization and stress resistance of uropathogenic Escherichia coli.</title>
        <authorList>
            <person name="Norton J.P."/>
            <person name="Mulvey M.A."/>
        </authorList>
    </citation>
    <scope>DISRUPTION PHENOTYPE</scope>
    <source>
        <strain>CFT073 / ATCC 700928 / UPEC</strain>
    </source>
</reference>
<accession>Q8FG53</accession>
<organism>
    <name type="scientific">Escherichia coli O6:H1 (strain CFT073 / ATCC 700928 / UPEC)</name>
    <dbReference type="NCBI Taxonomy" id="199310"/>
    <lineage>
        <taxon>Bacteria</taxon>
        <taxon>Pseudomonadati</taxon>
        <taxon>Pseudomonadota</taxon>
        <taxon>Gammaproteobacteria</taxon>
        <taxon>Enterobacterales</taxon>
        <taxon>Enterobacteriaceae</taxon>
        <taxon>Escherichia</taxon>
    </lineage>
</organism>